<keyword id="KW-0963">Cytoplasm</keyword>
<keyword id="KW-0238">DNA-binding</keyword>
<keyword id="KW-1185">Reference proteome</keyword>
<keyword id="KW-0804">Transcription</keyword>
<keyword id="KW-0805">Transcription regulation</keyword>
<protein>
    <recommendedName>
        <fullName evidence="1">Probable transcriptional regulatory protein TTE1135</fullName>
    </recommendedName>
</protein>
<organism>
    <name type="scientific">Caldanaerobacter subterraneus subsp. tengcongensis (strain DSM 15242 / JCM 11007 / NBRC 100824 / MB4)</name>
    <name type="common">Thermoanaerobacter tengcongensis</name>
    <dbReference type="NCBI Taxonomy" id="273068"/>
    <lineage>
        <taxon>Bacteria</taxon>
        <taxon>Bacillati</taxon>
        <taxon>Bacillota</taxon>
        <taxon>Clostridia</taxon>
        <taxon>Thermoanaerobacterales</taxon>
        <taxon>Thermoanaerobacteraceae</taxon>
        <taxon>Caldanaerobacter</taxon>
    </lineage>
</organism>
<dbReference type="EMBL" id="AE008691">
    <property type="protein sequence ID" value="AAM24370.1"/>
    <property type="status" value="ALT_INIT"/>
    <property type="molecule type" value="Genomic_DNA"/>
</dbReference>
<dbReference type="RefSeq" id="WP_041587143.1">
    <property type="nucleotide sequence ID" value="NC_003869.1"/>
</dbReference>
<dbReference type="SMR" id="Q8RAR7"/>
<dbReference type="STRING" id="273068.TTE1135"/>
<dbReference type="KEGG" id="tte:TTE1135"/>
<dbReference type="eggNOG" id="COG0217">
    <property type="taxonomic scope" value="Bacteria"/>
</dbReference>
<dbReference type="HOGENOM" id="CLU_062974_2_2_9"/>
<dbReference type="OrthoDB" id="9781053at2"/>
<dbReference type="Proteomes" id="UP000000555">
    <property type="component" value="Chromosome"/>
</dbReference>
<dbReference type="GO" id="GO:0005829">
    <property type="term" value="C:cytosol"/>
    <property type="evidence" value="ECO:0007669"/>
    <property type="project" value="TreeGrafter"/>
</dbReference>
<dbReference type="GO" id="GO:0003677">
    <property type="term" value="F:DNA binding"/>
    <property type="evidence" value="ECO:0007669"/>
    <property type="project" value="UniProtKB-UniRule"/>
</dbReference>
<dbReference type="GO" id="GO:0006355">
    <property type="term" value="P:regulation of DNA-templated transcription"/>
    <property type="evidence" value="ECO:0007669"/>
    <property type="project" value="UniProtKB-UniRule"/>
</dbReference>
<dbReference type="FunFam" id="1.10.10.200:FF:000002">
    <property type="entry name" value="Probable transcriptional regulatory protein CLM62_37755"/>
    <property type="match status" value="1"/>
</dbReference>
<dbReference type="FunFam" id="3.30.70.980:FF:000002">
    <property type="entry name" value="Probable transcriptional regulatory protein YebC"/>
    <property type="match status" value="1"/>
</dbReference>
<dbReference type="Gene3D" id="1.10.10.200">
    <property type="match status" value="1"/>
</dbReference>
<dbReference type="Gene3D" id="3.30.70.980">
    <property type="match status" value="2"/>
</dbReference>
<dbReference type="HAMAP" id="MF_00693">
    <property type="entry name" value="Transcrip_reg_TACO1"/>
    <property type="match status" value="1"/>
</dbReference>
<dbReference type="InterPro" id="IPR017856">
    <property type="entry name" value="Integrase-like_N"/>
</dbReference>
<dbReference type="InterPro" id="IPR048300">
    <property type="entry name" value="TACO1_YebC-like_2nd/3rd_dom"/>
</dbReference>
<dbReference type="InterPro" id="IPR049083">
    <property type="entry name" value="TACO1_YebC_N"/>
</dbReference>
<dbReference type="InterPro" id="IPR002876">
    <property type="entry name" value="Transcrip_reg_TACO1-like"/>
</dbReference>
<dbReference type="InterPro" id="IPR026564">
    <property type="entry name" value="Transcrip_reg_TACO1-like_dom3"/>
</dbReference>
<dbReference type="InterPro" id="IPR029072">
    <property type="entry name" value="YebC-like"/>
</dbReference>
<dbReference type="NCBIfam" id="NF001030">
    <property type="entry name" value="PRK00110.1"/>
    <property type="match status" value="1"/>
</dbReference>
<dbReference type="NCBIfam" id="NF009044">
    <property type="entry name" value="PRK12378.1"/>
    <property type="match status" value="1"/>
</dbReference>
<dbReference type="NCBIfam" id="TIGR01033">
    <property type="entry name" value="YebC/PmpR family DNA-binding transcriptional regulator"/>
    <property type="match status" value="1"/>
</dbReference>
<dbReference type="PANTHER" id="PTHR12532:SF6">
    <property type="entry name" value="TRANSCRIPTIONAL REGULATORY PROTEIN YEBC-RELATED"/>
    <property type="match status" value="1"/>
</dbReference>
<dbReference type="PANTHER" id="PTHR12532">
    <property type="entry name" value="TRANSLATIONAL ACTIVATOR OF CYTOCHROME C OXIDASE 1"/>
    <property type="match status" value="1"/>
</dbReference>
<dbReference type="Pfam" id="PF20772">
    <property type="entry name" value="TACO1_YebC_N"/>
    <property type="match status" value="1"/>
</dbReference>
<dbReference type="Pfam" id="PF01709">
    <property type="entry name" value="Transcrip_reg"/>
    <property type="match status" value="1"/>
</dbReference>
<dbReference type="SUPFAM" id="SSF75625">
    <property type="entry name" value="YebC-like"/>
    <property type="match status" value="1"/>
</dbReference>
<evidence type="ECO:0000255" key="1">
    <source>
        <dbReference type="HAMAP-Rule" id="MF_00693"/>
    </source>
</evidence>
<evidence type="ECO:0000305" key="2"/>
<reference key="1">
    <citation type="journal article" date="2002" name="Genome Res.">
        <title>A complete sequence of the T. tengcongensis genome.</title>
        <authorList>
            <person name="Bao Q."/>
            <person name="Tian Y."/>
            <person name="Li W."/>
            <person name="Xu Z."/>
            <person name="Xuan Z."/>
            <person name="Hu S."/>
            <person name="Dong W."/>
            <person name="Yang J."/>
            <person name="Chen Y."/>
            <person name="Xue Y."/>
            <person name="Xu Y."/>
            <person name="Lai X."/>
            <person name="Huang L."/>
            <person name="Dong X."/>
            <person name="Ma Y."/>
            <person name="Ling L."/>
            <person name="Tan H."/>
            <person name="Chen R."/>
            <person name="Wang J."/>
            <person name="Yu J."/>
            <person name="Yang H."/>
        </authorList>
    </citation>
    <scope>NUCLEOTIDE SEQUENCE [LARGE SCALE GENOMIC DNA]</scope>
    <source>
        <strain>DSM 15242 / JCM 11007 / NBRC 100824 / MB4</strain>
    </source>
</reference>
<accession>Q8RAR7</accession>
<sequence>MAGHSKWANIKHKKEKMDAKKGRIFTKLTKDIIKAAKEGGGDPETNSKLKLAIERAKAFNLPSENIQRAIKRGTGELGGAKLEEVIYEGYGPAGTAIIVEALTDNKNRTAGEIRHIFDRNGGTLGAAGSVTWMFDKVGVIVVEKTDSINEEDLMMVAIEAGAEDFSADEGEFEIITDPSNFQEVREAIEKAGYKISEAEITMLPKNTIKLSPEDYEKFEKLIDKLEDNDDVQNVYHNVELEDE</sequence>
<name>Y1135_CALS4</name>
<proteinExistence type="inferred from homology"/>
<gene>
    <name type="ordered locus">TTE1135</name>
</gene>
<comment type="subcellular location">
    <subcellularLocation>
        <location evidence="1">Cytoplasm</location>
    </subcellularLocation>
</comment>
<comment type="similarity">
    <text evidence="1">Belongs to the TACO1 family.</text>
</comment>
<comment type="sequence caution" evidence="2">
    <conflict type="erroneous initiation">
        <sequence resource="EMBL-CDS" id="AAM24370"/>
    </conflict>
</comment>
<feature type="chain" id="PRO_0000175920" description="Probable transcriptional regulatory protein TTE1135">
    <location>
        <begin position="1"/>
        <end position="243"/>
    </location>
</feature>